<keyword id="KW-1185">Reference proteome</keyword>
<protein>
    <recommendedName>
        <fullName>Uncharacterized protein RP034</fullName>
    </recommendedName>
</protein>
<dbReference type="EMBL" id="AJ235270">
    <property type="protein sequence ID" value="CAA14505.1"/>
    <property type="molecule type" value="Genomic_DNA"/>
</dbReference>
<dbReference type="PIR" id="B71711">
    <property type="entry name" value="B71711"/>
</dbReference>
<dbReference type="RefSeq" id="NP_220428.1">
    <property type="nucleotide sequence ID" value="NC_000963.1"/>
</dbReference>
<dbReference type="RefSeq" id="WP_004599712.1">
    <property type="nucleotide sequence ID" value="NC_000963.1"/>
</dbReference>
<dbReference type="EnsemblBacteria" id="CAA14505">
    <property type="protein sequence ID" value="CAA14505"/>
    <property type="gene ID" value="CAA14505"/>
</dbReference>
<dbReference type="KEGG" id="rpr:RP034"/>
<dbReference type="PATRIC" id="fig|272947.5.peg.35"/>
<dbReference type="eggNOG" id="ENOG5033PK8">
    <property type="taxonomic scope" value="Bacteria"/>
</dbReference>
<dbReference type="HOGENOM" id="CLU_622379_0_0_5"/>
<dbReference type="OrthoDB" id="7160437at2"/>
<dbReference type="Proteomes" id="UP000002480">
    <property type="component" value="Chromosome"/>
</dbReference>
<dbReference type="InterPro" id="IPR020183">
    <property type="entry name" value="Uncharacterised_RC0048"/>
</dbReference>
<dbReference type="Pfam" id="PF10871">
    <property type="entry name" value="DUF2748"/>
    <property type="match status" value="1"/>
</dbReference>
<organism>
    <name type="scientific">Rickettsia prowazekii (strain Madrid E)</name>
    <dbReference type="NCBI Taxonomy" id="272947"/>
    <lineage>
        <taxon>Bacteria</taxon>
        <taxon>Pseudomonadati</taxon>
        <taxon>Pseudomonadota</taxon>
        <taxon>Alphaproteobacteria</taxon>
        <taxon>Rickettsiales</taxon>
        <taxon>Rickettsiaceae</taxon>
        <taxon>Rickettsieae</taxon>
        <taxon>Rickettsia</taxon>
        <taxon>typhus group</taxon>
    </lineage>
</organism>
<reference key="1">
    <citation type="journal article" date="1998" name="Nature">
        <title>The genome sequence of Rickettsia prowazekii and the origin of mitochondria.</title>
        <authorList>
            <person name="Andersson S.G.E."/>
            <person name="Zomorodipour A."/>
            <person name="Andersson J.O."/>
            <person name="Sicheritz-Ponten T."/>
            <person name="Alsmark U.C.M."/>
            <person name="Podowski R.M."/>
            <person name="Naeslund A.K."/>
            <person name="Eriksson A.-S."/>
            <person name="Winkler H.H."/>
            <person name="Kurland C.G."/>
        </authorList>
    </citation>
    <scope>NUCLEOTIDE SEQUENCE [LARGE SCALE GENOMIC DNA]</scope>
    <source>
        <strain>Madrid E</strain>
    </source>
</reference>
<gene>
    <name type="ordered locus">RP034</name>
</gene>
<proteinExistence type="predicted"/>
<feature type="chain" id="PRO_0000101304" description="Uncharacterized protein RP034">
    <location>
        <begin position="1"/>
        <end position="440"/>
    </location>
</feature>
<sequence>MTSIYHILDRIPAIYKQDMEIEYEYLAMQLIKSGKLRIDTNDCCNFARFTDPALNINLMISKEELTKPHLIPETTKLFQSLYKNSASDQKINSIFDNLKKQIQKLQPVKKEVTEMLARLFVQSAHPIVIRWLLLNKTEVFLTYSHNIGDMMDIVSWQRVGGNSGMQSTNGKDVAIFVSCGGNPFAENNKEHPSYGDGFAAVARLQIIAAQELGHFADIKRDDKGRQLTRHAANFSGTKATDKVRIARKSDIIHCNNLFNKLLNAGMKKQLEYETKLKFYNTNKINGVKVNAIKCMILIYKFRLLNYSSKNNLIFIRKFKTYKYMALMLEAMFKDMQDNLSPNAEVYKNKNPEIEEAIACIEALARVPQQTIKWGYLTTKETMHHLYKIYYNEVIPSLITSYNSFTGENYKRNLKKPKSSFFSKINIFSNKKLILKPVREL</sequence>
<name>Y034_RICPR</name>
<accession>Q9ZEB1</accession>